<sequence>MMKMRWLSAAVMLTLYTSSSWAFSIDDVAKQAQSLAGKGYEAPKSNLPSVFRDMKYADYQQIQFNHDKAYWNNLKTPFKLEFYHQGMYFDTPVKINEVTATAVKRIKYSPDYFTFGDVQHDKDTVKDLGFAGFKVLYPINSKDKNDEIVSMLGASYFRVIGAGQVYGLSARGLAIDTALPSGEEFPRFKEFWIERPKPTDKRLTIYALLDSPRATGAYKFVVMPGRDTVVDVQSKIYLRDKVGKLGVAPLTSMFLFGPNQPSPANNYRPELHDSNGLSIHAGNGEWIWRPLNNPKHLAVSSFSMENPQGFGLLQRGRDFSRFEDLDDRYDLRPSAWVTPKGEWGKGSVELVEIPTNDETNDNIVAYWTPDQLPEPGKEMNFKYTITFSRDEDKLHAPDNAWVQQTRRSTGDVKQSNLIRQPDGTIAFVVDFTGAEMKKLPEDTPVTAQTSIGDNGEIVESTVRYNPVTKGWRLVMRVKVKDAKKTTEMRAALVNADQTLSETWSYQLPANE</sequence>
<proteinExistence type="inferred from homology"/>
<evidence type="ECO:0000255" key="1">
    <source>
        <dbReference type="HAMAP-Rule" id="MF_01069"/>
    </source>
</evidence>
<name>OPGG_SHIB3</name>
<dbReference type="EMBL" id="CP001063">
    <property type="protein sequence ID" value="ACD07266.1"/>
    <property type="molecule type" value="Genomic_DNA"/>
</dbReference>
<dbReference type="RefSeq" id="WP_001300662.1">
    <property type="nucleotide sequence ID" value="NC_010658.1"/>
</dbReference>
<dbReference type="SMR" id="B2TTM3"/>
<dbReference type="STRING" id="344609.SbBS512_E2282"/>
<dbReference type="GeneID" id="93776366"/>
<dbReference type="KEGG" id="sbc:SbBS512_E2282"/>
<dbReference type="HOGENOM" id="CLU_023403_2_0_6"/>
<dbReference type="UniPathway" id="UPA00637"/>
<dbReference type="Proteomes" id="UP000001030">
    <property type="component" value="Chromosome"/>
</dbReference>
<dbReference type="GO" id="GO:0030288">
    <property type="term" value="C:outer membrane-bounded periplasmic space"/>
    <property type="evidence" value="ECO:0007669"/>
    <property type="project" value="TreeGrafter"/>
</dbReference>
<dbReference type="GO" id="GO:0030246">
    <property type="term" value="F:carbohydrate binding"/>
    <property type="evidence" value="ECO:0007669"/>
    <property type="project" value="InterPro"/>
</dbReference>
<dbReference type="GO" id="GO:0003824">
    <property type="term" value="F:catalytic activity"/>
    <property type="evidence" value="ECO:0007669"/>
    <property type="project" value="InterPro"/>
</dbReference>
<dbReference type="GO" id="GO:0051274">
    <property type="term" value="P:beta-glucan biosynthetic process"/>
    <property type="evidence" value="ECO:0007669"/>
    <property type="project" value="TreeGrafter"/>
</dbReference>
<dbReference type="FunFam" id="2.60.40.10:FF:000294">
    <property type="entry name" value="Glucans biosynthesis protein G"/>
    <property type="match status" value="1"/>
</dbReference>
<dbReference type="FunFam" id="2.70.98.10:FF:000001">
    <property type="entry name" value="Glucans biosynthesis protein G"/>
    <property type="match status" value="1"/>
</dbReference>
<dbReference type="Gene3D" id="2.70.98.10">
    <property type="match status" value="1"/>
</dbReference>
<dbReference type="Gene3D" id="2.60.40.10">
    <property type="entry name" value="Immunoglobulins"/>
    <property type="match status" value="1"/>
</dbReference>
<dbReference type="HAMAP" id="MF_01069">
    <property type="entry name" value="MdoG_OpgG"/>
    <property type="match status" value="1"/>
</dbReference>
<dbReference type="InterPro" id="IPR011013">
    <property type="entry name" value="Gal_mutarotase_sf_dom"/>
</dbReference>
<dbReference type="InterPro" id="IPR014718">
    <property type="entry name" value="GH-type_carb-bd"/>
</dbReference>
<dbReference type="InterPro" id="IPR014438">
    <property type="entry name" value="Glucan_biosyn_MdoG/MdoD"/>
</dbReference>
<dbReference type="InterPro" id="IPR007444">
    <property type="entry name" value="Glucan_biosyn_MdoG_C"/>
</dbReference>
<dbReference type="InterPro" id="IPR013783">
    <property type="entry name" value="Ig-like_fold"/>
</dbReference>
<dbReference type="InterPro" id="IPR014756">
    <property type="entry name" value="Ig_E-set"/>
</dbReference>
<dbReference type="InterPro" id="IPR023704">
    <property type="entry name" value="MdoG_OpgG"/>
</dbReference>
<dbReference type="PANTHER" id="PTHR30504">
    <property type="entry name" value="GLUCANS BIOSYNTHESIS PROTEIN"/>
    <property type="match status" value="1"/>
</dbReference>
<dbReference type="PANTHER" id="PTHR30504:SF4">
    <property type="entry name" value="GLUCANS BIOSYNTHESIS PROTEIN G"/>
    <property type="match status" value="1"/>
</dbReference>
<dbReference type="Pfam" id="PF04349">
    <property type="entry name" value="MdoG"/>
    <property type="match status" value="1"/>
</dbReference>
<dbReference type="PIRSF" id="PIRSF006281">
    <property type="entry name" value="MdoG"/>
    <property type="match status" value="1"/>
</dbReference>
<dbReference type="SUPFAM" id="SSF81296">
    <property type="entry name" value="E set domains"/>
    <property type="match status" value="1"/>
</dbReference>
<dbReference type="SUPFAM" id="SSF74650">
    <property type="entry name" value="Galactose mutarotase-like"/>
    <property type="match status" value="1"/>
</dbReference>
<reference key="1">
    <citation type="submission" date="2008-05" db="EMBL/GenBank/DDBJ databases">
        <title>Complete sequence of Shigella boydii serotype 18 strain BS512.</title>
        <authorList>
            <person name="Rasko D.A."/>
            <person name="Rosovitz M."/>
            <person name="Maurelli A.T."/>
            <person name="Myers G."/>
            <person name="Seshadri R."/>
            <person name="Cer R."/>
            <person name="Jiang L."/>
            <person name="Ravel J."/>
            <person name="Sebastian Y."/>
        </authorList>
    </citation>
    <scope>NUCLEOTIDE SEQUENCE [LARGE SCALE GENOMIC DNA]</scope>
    <source>
        <strain>CDC 3083-94 / BS512</strain>
    </source>
</reference>
<organism>
    <name type="scientific">Shigella boydii serotype 18 (strain CDC 3083-94 / BS512)</name>
    <dbReference type="NCBI Taxonomy" id="344609"/>
    <lineage>
        <taxon>Bacteria</taxon>
        <taxon>Pseudomonadati</taxon>
        <taxon>Pseudomonadota</taxon>
        <taxon>Gammaproteobacteria</taxon>
        <taxon>Enterobacterales</taxon>
        <taxon>Enterobacteriaceae</taxon>
        <taxon>Shigella</taxon>
    </lineage>
</organism>
<gene>
    <name evidence="1" type="primary">mdoG</name>
    <name evidence="1" type="synonym">opgG</name>
    <name type="ordered locus">SbBS512_E2282</name>
</gene>
<feature type="signal peptide" evidence="1">
    <location>
        <begin position="1"/>
        <end position="22"/>
    </location>
</feature>
<feature type="chain" id="PRO_1000136619" description="Glucans biosynthesis protein G">
    <location>
        <begin position="23"/>
        <end position="511"/>
    </location>
</feature>
<keyword id="KW-0574">Periplasm</keyword>
<keyword id="KW-1185">Reference proteome</keyword>
<keyword id="KW-0732">Signal</keyword>
<protein>
    <recommendedName>
        <fullName evidence="1">Glucans biosynthesis protein G</fullName>
    </recommendedName>
</protein>
<comment type="function">
    <text evidence="1">Involved in the biosynthesis of osmoregulated periplasmic glucans (OPGs).</text>
</comment>
<comment type="pathway">
    <text evidence="1">Glycan metabolism; osmoregulated periplasmic glucan (OPG) biosynthesis.</text>
</comment>
<comment type="subcellular location">
    <subcellularLocation>
        <location evidence="1">Periplasm</location>
    </subcellularLocation>
</comment>
<comment type="similarity">
    <text evidence="1">Belongs to the OpgD/OpgG family.</text>
</comment>
<accession>B2TTM3</accession>